<comment type="function">
    <text evidence="1">Proton-dependent permease that transports di- and tripeptides.</text>
</comment>
<comment type="subcellular location">
    <subcellularLocation>
        <location evidence="1">Cell inner membrane</location>
        <topology evidence="1">Multi-pass membrane protein</topology>
    </subcellularLocation>
</comment>
<comment type="similarity">
    <text evidence="1">Belongs to the major facilitator superfamily. Proton-dependent oligopeptide transporter (POT/PTR) (TC 2.A.17) family. DtpA subfamily.</text>
</comment>
<gene>
    <name evidence="1" type="primary">dtpA</name>
    <name type="ordered locus">PMI1584</name>
</gene>
<reference key="1">
    <citation type="journal article" date="2008" name="J. Bacteriol.">
        <title>Complete genome sequence of uropathogenic Proteus mirabilis, a master of both adherence and motility.</title>
        <authorList>
            <person name="Pearson M.M."/>
            <person name="Sebaihia M."/>
            <person name="Churcher C."/>
            <person name="Quail M.A."/>
            <person name="Seshasayee A.S."/>
            <person name="Luscombe N.M."/>
            <person name="Abdellah Z."/>
            <person name="Arrosmith C."/>
            <person name="Atkin B."/>
            <person name="Chillingworth T."/>
            <person name="Hauser H."/>
            <person name="Jagels K."/>
            <person name="Moule S."/>
            <person name="Mungall K."/>
            <person name="Norbertczak H."/>
            <person name="Rabbinowitsch E."/>
            <person name="Walker D."/>
            <person name="Whithead S."/>
            <person name="Thomson N.R."/>
            <person name="Rather P.N."/>
            <person name="Parkhill J."/>
            <person name="Mobley H.L.T."/>
        </authorList>
    </citation>
    <scope>NUCLEOTIDE SEQUENCE [LARGE SCALE GENOMIC DNA]</scope>
    <source>
        <strain>HI4320</strain>
    </source>
</reference>
<accession>B4EY98</accession>
<feature type="chain" id="PRO_0000395180" description="Dipeptide and tripeptide permease A">
    <location>
        <begin position="1"/>
        <end position="488"/>
    </location>
</feature>
<feature type="topological domain" description="Cytoplasmic" evidence="1">
    <location>
        <begin position="1"/>
        <end position="35"/>
    </location>
</feature>
<feature type="transmembrane region" description="Helical" evidence="1">
    <location>
        <begin position="36"/>
        <end position="56"/>
    </location>
</feature>
<feature type="topological domain" description="Periplasmic" evidence="1">
    <location>
        <begin position="57"/>
        <end position="60"/>
    </location>
</feature>
<feature type="transmembrane region" description="Helical" evidence="1">
    <location>
        <begin position="61"/>
        <end position="81"/>
    </location>
</feature>
<feature type="topological domain" description="Cytoplasmic" evidence="1">
    <location>
        <begin position="82"/>
        <end position="90"/>
    </location>
</feature>
<feature type="transmembrane region" description="Helical" evidence="1">
    <location>
        <begin position="91"/>
        <end position="111"/>
    </location>
</feature>
<feature type="topological domain" description="Periplasmic" evidence="1">
    <location>
        <begin position="112"/>
        <end position="114"/>
    </location>
</feature>
<feature type="transmembrane region" description="Helical" evidence="1">
    <location>
        <begin position="115"/>
        <end position="135"/>
    </location>
</feature>
<feature type="topological domain" description="Cytoplasmic" evidence="1">
    <location>
        <begin position="136"/>
        <end position="154"/>
    </location>
</feature>
<feature type="transmembrane region" description="Helical" evidence="1">
    <location>
        <begin position="155"/>
        <end position="175"/>
    </location>
</feature>
<feature type="topological domain" description="Periplasmic" evidence="1">
    <location>
        <begin position="176"/>
        <end position="179"/>
    </location>
</feature>
<feature type="transmembrane region" description="Helical" evidence="1">
    <location>
        <begin position="180"/>
        <end position="200"/>
    </location>
</feature>
<feature type="topological domain" description="Cytoplasmic" evidence="1">
    <location>
        <begin position="201"/>
        <end position="219"/>
    </location>
</feature>
<feature type="transmembrane region" description="Helical" evidence="1">
    <location>
        <begin position="220"/>
        <end position="240"/>
    </location>
</feature>
<feature type="topological domain" description="Periplasmic" evidence="1">
    <location>
        <position position="241"/>
    </location>
</feature>
<feature type="transmembrane region" description="Helical" evidence="1">
    <location>
        <begin position="242"/>
        <end position="262"/>
    </location>
</feature>
<feature type="topological domain" description="Cytoplasmic" evidence="1">
    <location>
        <begin position="263"/>
        <end position="275"/>
    </location>
</feature>
<feature type="transmembrane region" description="Helical" evidence="1">
    <location>
        <begin position="276"/>
        <end position="296"/>
    </location>
</feature>
<feature type="topological domain" description="Periplasmic" evidence="1">
    <location>
        <begin position="297"/>
        <end position="324"/>
    </location>
</feature>
<feature type="transmembrane region" description="Helical" evidence="1">
    <location>
        <begin position="325"/>
        <end position="345"/>
    </location>
</feature>
<feature type="topological domain" description="Cytoplasmic" evidence="1">
    <location>
        <begin position="346"/>
        <end position="353"/>
    </location>
</feature>
<feature type="transmembrane region" description="Helical" evidence="1">
    <location>
        <begin position="354"/>
        <end position="374"/>
    </location>
</feature>
<feature type="topological domain" description="Periplasmic" evidence="1">
    <location>
        <begin position="375"/>
        <end position="391"/>
    </location>
</feature>
<feature type="transmembrane region" description="Helical" evidence="1">
    <location>
        <begin position="392"/>
        <end position="412"/>
    </location>
</feature>
<feature type="topological domain" description="Cytoplasmic" evidence="1">
    <location>
        <begin position="413"/>
        <end position="415"/>
    </location>
</feature>
<feature type="transmembrane region" description="Helical" evidence="1">
    <location>
        <begin position="416"/>
        <end position="436"/>
    </location>
</feature>
<feature type="topological domain" description="Periplasmic" evidence="1">
    <location>
        <begin position="437"/>
        <end position="460"/>
    </location>
</feature>
<feature type="transmembrane region" description="Helical" evidence="1">
    <location>
        <begin position="461"/>
        <end position="481"/>
    </location>
</feature>
<feature type="topological domain" description="Cytoplasmic" evidence="1">
    <location>
        <begin position="482"/>
        <end position="488"/>
    </location>
</feature>
<organism>
    <name type="scientific">Proteus mirabilis (strain HI4320)</name>
    <dbReference type="NCBI Taxonomy" id="529507"/>
    <lineage>
        <taxon>Bacteria</taxon>
        <taxon>Pseudomonadati</taxon>
        <taxon>Pseudomonadota</taxon>
        <taxon>Gammaproteobacteria</taxon>
        <taxon>Enterobacterales</taxon>
        <taxon>Morganellaceae</taxon>
        <taxon>Proteus</taxon>
    </lineage>
</organism>
<keyword id="KW-0997">Cell inner membrane</keyword>
<keyword id="KW-1003">Cell membrane</keyword>
<keyword id="KW-0472">Membrane</keyword>
<keyword id="KW-0571">Peptide transport</keyword>
<keyword id="KW-0653">Protein transport</keyword>
<keyword id="KW-1185">Reference proteome</keyword>
<keyword id="KW-0812">Transmembrane</keyword>
<keyword id="KW-1133">Transmembrane helix</keyword>
<keyword id="KW-0813">Transport</keyword>
<proteinExistence type="inferred from homology"/>
<name>DTPA_PROMH</name>
<dbReference type="EMBL" id="AM942759">
    <property type="protein sequence ID" value="CAR43316.1"/>
    <property type="molecule type" value="Genomic_DNA"/>
</dbReference>
<dbReference type="RefSeq" id="WP_004243443.1">
    <property type="nucleotide sequence ID" value="NC_010554.1"/>
</dbReference>
<dbReference type="SMR" id="B4EY98"/>
<dbReference type="EnsemblBacteria" id="CAR43316">
    <property type="protein sequence ID" value="CAR43316"/>
    <property type="gene ID" value="PMI1584"/>
</dbReference>
<dbReference type="GeneID" id="6802870"/>
<dbReference type="KEGG" id="pmr:PMI1584"/>
<dbReference type="eggNOG" id="COG3104">
    <property type="taxonomic scope" value="Bacteria"/>
</dbReference>
<dbReference type="HOGENOM" id="CLU_004790_0_0_6"/>
<dbReference type="Proteomes" id="UP000008319">
    <property type="component" value="Chromosome"/>
</dbReference>
<dbReference type="GO" id="GO:0005886">
    <property type="term" value="C:plasma membrane"/>
    <property type="evidence" value="ECO:0007669"/>
    <property type="project" value="UniProtKB-SubCell"/>
</dbReference>
<dbReference type="GO" id="GO:0071916">
    <property type="term" value="F:dipeptide transmembrane transporter activity"/>
    <property type="evidence" value="ECO:0007669"/>
    <property type="project" value="UniProtKB-UniRule"/>
</dbReference>
<dbReference type="GO" id="GO:0015333">
    <property type="term" value="F:peptide:proton symporter activity"/>
    <property type="evidence" value="ECO:0007669"/>
    <property type="project" value="UniProtKB-UniRule"/>
</dbReference>
<dbReference type="GO" id="GO:0042937">
    <property type="term" value="F:tripeptide transmembrane transporter activity"/>
    <property type="evidence" value="ECO:0007669"/>
    <property type="project" value="UniProtKB-UniRule"/>
</dbReference>
<dbReference type="GO" id="GO:0015031">
    <property type="term" value="P:protein transport"/>
    <property type="evidence" value="ECO:0007669"/>
    <property type="project" value="UniProtKB-KW"/>
</dbReference>
<dbReference type="CDD" id="cd17346">
    <property type="entry name" value="MFS_DtpA_like"/>
    <property type="match status" value="1"/>
</dbReference>
<dbReference type="FunFam" id="1.20.1250.20:FF:000017">
    <property type="entry name" value="Dipeptide and tripeptide permease A"/>
    <property type="match status" value="1"/>
</dbReference>
<dbReference type="Gene3D" id="1.20.1250.20">
    <property type="entry name" value="MFS general substrate transporter like domains"/>
    <property type="match status" value="1"/>
</dbReference>
<dbReference type="HAMAP" id="MF_01878">
    <property type="entry name" value="PTR2_DtpA_subfam"/>
    <property type="match status" value="1"/>
</dbReference>
<dbReference type="InterPro" id="IPR023517">
    <property type="entry name" value="AA/pep_transptr_DtpA"/>
</dbReference>
<dbReference type="InterPro" id="IPR005279">
    <property type="entry name" value="Dipep/tripep_permease"/>
</dbReference>
<dbReference type="InterPro" id="IPR020846">
    <property type="entry name" value="MFS_dom"/>
</dbReference>
<dbReference type="InterPro" id="IPR036259">
    <property type="entry name" value="MFS_trans_sf"/>
</dbReference>
<dbReference type="InterPro" id="IPR050171">
    <property type="entry name" value="MFS_Transporters"/>
</dbReference>
<dbReference type="InterPro" id="IPR000109">
    <property type="entry name" value="POT_fam"/>
</dbReference>
<dbReference type="InterPro" id="IPR018456">
    <property type="entry name" value="PTR2_symporter_CS"/>
</dbReference>
<dbReference type="NCBIfam" id="NF007137">
    <property type="entry name" value="PRK09584.1"/>
    <property type="match status" value="1"/>
</dbReference>
<dbReference type="NCBIfam" id="TIGR00924">
    <property type="entry name" value="yjdL_sub1_fam"/>
    <property type="match status" value="1"/>
</dbReference>
<dbReference type="PANTHER" id="PTHR23517:SF15">
    <property type="entry name" value="PROTON-DEPENDENT OLIGOPEPTIDE FAMILY TRANSPORT PROTEIN"/>
    <property type="match status" value="1"/>
</dbReference>
<dbReference type="PANTHER" id="PTHR23517">
    <property type="entry name" value="RESISTANCE PROTEIN MDTM, PUTATIVE-RELATED-RELATED"/>
    <property type="match status" value="1"/>
</dbReference>
<dbReference type="Pfam" id="PF00854">
    <property type="entry name" value="PTR2"/>
    <property type="match status" value="1"/>
</dbReference>
<dbReference type="SUPFAM" id="SSF103473">
    <property type="entry name" value="MFS general substrate transporter"/>
    <property type="match status" value="1"/>
</dbReference>
<dbReference type="PROSITE" id="PS50850">
    <property type="entry name" value="MFS"/>
    <property type="match status" value="1"/>
</dbReference>
<dbReference type="PROSITE" id="PS01022">
    <property type="entry name" value="PTR2_1"/>
    <property type="match status" value="1"/>
</dbReference>
<dbReference type="PROSITE" id="PS01023">
    <property type="entry name" value="PTR2_2"/>
    <property type="match status" value="1"/>
</dbReference>
<evidence type="ECO:0000255" key="1">
    <source>
        <dbReference type="HAMAP-Rule" id="MF_01878"/>
    </source>
</evidence>
<protein>
    <recommendedName>
        <fullName evidence="1">Dipeptide and tripeptide permease A</fullName>
    </recommendedName>
</protein>
<sequence>MSTANTPEDEQKPSLNAFKQPRAFYLIFSIELWERFGYYGLQGIMAVYLVKMLGMSEAEAITVFAAFTALVYGFVAIGGWLGDKILGTKRVIVLGAIVLAIGYAMVAFSDHDKDMIYWGLATIAVGNGLFKANPSSLLATCYEKDDPQLDGAFTMYYMSINVGSFLSMLATPWLAANYGWDVAFALSVVGMLITLANFMLCRGWIKDKGSRPDFEPLNYLKLLLTLVGIVALTAVSTWLLHNNEVATWSLAIISLGIILIFARETFMMKGVARRKMIVAFLLMVEAVVFFVLYDQMPTSLNFFAIHNVEHAILGFSVEPEQFQSLNPFWIMLASPLLAAIYNFMGDKLPMPYKFTVGMFLSATAFLVLPLGASMANEAGIVSSWWLVASYGFQSIGELMISGLGLAMVAQLVPQRLMGFIMGAWFLTSAAAAIIAGKVASLMAVPEDVQNAHASLEIYSSVFLQIGIVTGVIALLMLFTAPMLSKMTQ</sequence>